<dbReference type="EMBL" id="CU928158">
    <property type="protein sequence ID" value="CAQ90712.1"/>
    <property type="molecule type" value="Genomic_DNA"/>
</dbReference>
<dbReference type="RefSeq" id="WP_000854043.1">
    <property type="nucleotide sequence ID" value="NC_011740.1"/>
</dbReference>
<dbReference type="SMR" id="B7LRL6"/>
<dbReference type="GeneID" id="75060165"/>
<dbReference type="KEGG" id="efe:EFER_3219"/>
<dbReference type="HOGENOM" id="CLU_018816_15_2_6"/>
<dbReference type="OrthoDB" id="9811754at2"/>
<dbReference type="Proteomes" id="UP000000745">
    <property type="component" value="Chromosome"/>
</dbReference>
<dbReference type="GO" id="GO:0005886">
    <property type="term" value="C:plasma membrane"/>
    <property type="evidence" value="ECO:0007669"/>
    <property type="project" value="UniProtKB-SubCell"/>
</dbReference>
<dbReference type="GO" id="GO:0022857">
    <property type="term" value="F:transmembrane transporter activity"/>
    <property type="evidence" value="ECO:0007669"/>
    <property type="project" value="UniProtKB-UniRule"/>
</dbReference>
<dbReference type="Gene3D" id="2.40.30.170">
    <property type="match status" value="1"/>
</dbReference>
<dbReference type="Gene3D" id="2.40.50.100">
    <property type="match status" value="1"/>
</dbReference>
<dbReference type="HAMAP" id="MF_01544">
    <property type="entry name" value="AaeA"/>
    <property type="match status" value="1"/>
</dbReference>
<dbReference type="InterPro" id="IPR043602">
    <property type="entry name" value="CusB-like_dom_1"/>
</dbReference>
<dbReference type="InterPro" id="IPR032317">
    <property type="entry name" value="CusB_D23"/>
</dbReference>
<dbReference type="InterPro" id="IPR050393">
    <property type="entry name" value="MFP_Efflux_Pump"/>
</dbReference>
<dbReference type="InterPro" id="IPR022871">
    <property type="entry name" value="PHBA_efflux_pump_AaeA"/>
</dbReference>
<dbReference type="InterPro" id="IPR006143">
    <property type="entry name" value="RND_pump_MFP"/>
</dbReference>
<dbReference type="NCBIfam" id="NF007850">
    <property type="entry name" value="PRK10559.1"/>
    <property type="match status" value="1"/>
</dbReference>
<dbReference type="NCBIfam" id="TIGR01730">
    <property type="entry name" value="RND_mfp"/>
    <property type="match status" value="1"/>
</dbReference>
<dbReference type="PANTHER" id="PTHR30367:SF12">
    <property type="entry name" value="P-HYDROXYBENZOIC ACID EFFLUX PUMP SUBUNIT AAEA"/>
    <property type="match status" value="1"/>
</dbReference>
<dbReference type="PANTHER" id="PTHR30367">
    <property type="entry name" value="P-HYDROXYBENZOIC ACID EFFLUX PUMP SUBUNIT AAEA-RELATED"/>
    <property type="match status" value="1"/>
</dbReference>
<dbReference type="Pfam" id="PF00529">
    <property type="entry name" value="CusB_dom_1"/>
    <property type="match status" value="1"/>
</dbReference>
<dbReference type="Pfam" id="PF16576">
    <property type="entry name" value="HlyD_D23"/>
    <property type="match status" value="1"/>
</dbReference>
<dbReference type="SUPFAM" id="SSF111369">
    <property type="entry name" value="HlyD-like secretion proteins"/>
    <property type="match status" value="1"/>
</dbReference>
<evidence type="ECO:0000255" key="1">
    <source>
        <dbReference type="HAMAP-Rule" id="MF_01544"/>
    </source>
</evidence>
<gene>
    <name evidence="1" type="primary">aaeA</name>
    <name type="ordered locus">EFER_3219</name>
</gene>
<accession>B7LRL6</accession>
<name>AAEA_ESCF3</name>
<comment type="function">
    <text evidence="1">Forms an efflux pump with AaeB.</text>
</comment>
<comment type="subcellular location">
    <subcellularLocation>
        <location evidence="1">Cell inner membrane</location>
        <topology evidence="1">Single-pass membrane protein</topology>
    </subcellularLocation>
</comment>
<comment type="induction">
    <text evidence="1">Positively coregulated with aaeB and aaeX by AaeR.</text>
</comment>
<comment type="similarity">
    <text evidence="1">Belongs to the membrane fusion protein (MFP) (TC 8.A.1) family.</text>
</comment>
<reference key="1">
    <citation type="journal article" date="2009" name="PLoS Genet.">
        <title>Organised genome dynamics in the Escherichia coli species results in highly diverse adaptive paths.</title>
        <authorList>
            <person name="Touchon M."/>
            <person name="Hoede C."/>
            <person name="Tenaillon O."/>
            <person name="Barbe V."/>
            <person name="Baeriswyl S."/>
            <person name="Bidet P."/>
            <person name="Bingen E."/>
            <person name="Bonacorsi S."/>
            <person name="Bouchier C."/>
            <person name="Bouvet O."/>
            <person name="Calteau A."/>
            <person name="Chiapello H."/>
            <person name="Clermont O."/>
            <person name="Cruveiller S."/>
            <person name="Danchin A."/>
            <person name="Diard M."/>
            <person name="Dossat C."/>
            <person name="Karoui M.E."/>
            <person name="Frapy E."/>
            <person name="Garry L."/>
            <person name="Ghigo J.M."/>
            <person name="Gilles A.M."/>
            <person name="Johnson J."/>
            <person name="Le Bouguenec C."/>
            <person name="Lescat M."/>
            <person name="Mangenot S."/>
            <person name="Martinez-Jehanne V."/>
            <person name="Matic I."/>
            <person name="Nassif X."/>
            <person name="Oztas S."/>
            <person name="Petit M.A."/>
            <person name="Pichon C."/>
            <person name="Rouy Z."/>
            <person name="Ruf C.S."/>
            <person name="Schneider D."/>
            <person name="Tourret J."/>
            <person name="Vacherie B."/>
            <person name="Vallenet D."/>
            <person name="Medigue C."/>
            <person name="Rocha E.P.C."/>
            <person name="Denamur E."/>
        </authorList>
    </citation>
    <scope>NUCLEOTIDE SEQUENCE [LARGE SCALE GENOMIC DNA]</scope>
    <source>
        <strain>ATCC 35469 / DSM 13698 / BCRC 15582 / CCUG 18766 / IAM 14443 / JCM 21226 / LMG 7866 / NBRC 102419 / NCTC 12128 / CDC 0568-73</strain>
    </source>
</reference>
<protein>
    <recommendedName>
        <fullName evidence="1">p-hydroxybenzoic acid efflux pump subunit AaeA</fullName>
        <shortName evidence="1">pHBA efflux pump protein A</shortName>
    </recommendedName>
</protein>
<keyword id="KW-0997">Cell inner membrane</keyword>
<keyword id="KW-1003">Cell membrane</keyword>
<keyword id="KW-0472">Membrane</keyword>
<keyword id="KW-0812">Transmembrane</keyword>
<keyword id="KW-1133">Transmembrane helix</keyword>
<keyword id="KW-0813">Transport</keyword>
<sequence length="310" mass="34624">MKTLIRKLTRTAITLVLVILAFIAIFRAWVYYTESPWTRDARFSADVVAIAPDVAGLITNVNVHDNQLVKKGQVLFTIDQPRYQKALAEAEADVAYYSVLAQEKRQEASRRNRLGVQAMSREEIDQANNVLQTVLHQLAKAQATRDLAKLDLERTVIRAPADGWVTNLNVYTGEFITRGSTAVALVKQNTFYVLAYMEETKLEGVRPGYRAEITPLGSNRVLKGTVDSIAAGVTNASSTRDAKGMATIDSNLEWVRLAQRVPVRIRLDAQPENLWPAGTTATVVVTGKDDRDESQDSFFRKMAHRLREFG</sequence>
<organism>
    <name type="scientific">Escherichia fergusonii (strain ATCC 35469 / DSM 13698 / CCUG 18766 / IAM 14443 / JCM 21226 / LMG 7866 / NBRC 102419 / NCTC 12128 / CDC 0568-73)</name>
    <dbReference type="NCBI Taxonomy" id="585054"/>
    <lineage>
        <taxon>Bacteria</taxon>
        <taxon>Pseudomonadati</taxon>
        <taxon>Pseudomonadota</taxon>
        <taxon>Gammaproteobacteria</taxon>
        <taxon>Enterobacterales</taxon>
        <taxon>Enterobacteriaceae</taxon>
        <taxon>Escherichia</taxon>
    </lineage>
</organism>
<feature type="chain" id="PRO_1000146720" description="p-hydroxybenzoic acid efflux pump subunit AaeA">
    <location>
        <begin position="1"/>
        <end position="310"/>
    </location>
</feature>
<feature type="transmembrane region" description="Helical" evidence="1">
    <location>
        <begin position="12"/>
        <end position="32"/>
    </location>
</feature>
<proteinExistence type="inferred from homology"/>